<accession>A6VP83</accession>
<protein>
    <recommendedName>
        <fullName evidence="1">Phenylalanine--tRNA ligase alpha subunit</fullName>
        <ecNumber evidence="1">6.1.1.20</ecNumber>
    </recommendedName>
    <alternativeName>
        <fullName evidence="1">Phenylalanyl-tRNA synthetase alpha subunit</fullName>
        <shortName evidence="1">PheRS</shortName>
    </alternativeName>
</protein>
<gene>
    <name evidence="1" type="primary">pheS</name>
    <name type="ordered locus">Asuc_1421</name>
</gene>
<name>SYFA_ACTSZ</name>
<proteinExistence type="inferred from homology"/>
<dbReference type="EC" id="6.1.1.20" evidence="1"/>
<dbReference type="EMBL" id="CP000746">
    <property type="protein sequence ID" value="ABR74780.1"/>
    <property type="molecule type" value="Genomic_DNA"/>
</dbReference>
<dbReference type="RefSeq" id="WP_012073157.1">
    <property type="nucleotide sequence ID" value="NC_009655.1"/>
</dbReference>
<dbReference type="SMR" id="A6VP83"/>
<dbReference type="STRING" id="339671.Asuc_1421"/>
<dbReference type="KEGG" id="asu:Asuc_1421"/>
<dbReference type="eggNOG" id="COG0016">
    <property type="taxonomic scope" value="Bacteria"/>
</dbReference>
<dbReference type="HOGENOM" id="CLU_025086_0_1_6"/>
<dbReference type="OrthoDB" id="9800719at2"/>
<dbReference type="Proteomes" id="UP000001114">
    <property type="component" value="Chromosome"/>
</dbReference>
<dbReference type="GO" id="GO:0005737">
    <property type="term" value="C:cytoplasm"/>
    <property type="evidence" value="ECO:0007669"/>
    <property type="project" value="UniProtKB-SubCell"/>
</dbReference>
<dbReference type="GO" id="GO:0005524">
    <property type="term" value="F:ATP binding"/>
    <property type="evidence" value="ECO:0007669"/>
    <property type="project" value="UniProtKB-UniRule"/>
</dbReference>
<dbReference type="GO" id="GO:0000287">
    <property type="term" value="F:magnesium ion binding"/>
    <property type="evidence" value="ECO:0007669"/>
    <property type="project" value="UniProtKB-UniRule"/>
</dbReference>
<dbReference type="GO" id="GO:0004826">
    <property type="term" value="F:phenylalanine-tRNA ligase activity"/>
    <property type="evidence" value="ECO:0007669"/>
    <property type="project" value="UniProtKB-UniRule"/>
</dbReference>
<dbReference type="GO" id="GO:0000049">
    <property type="term" value="F:tRNA binding"/>
    <property type="evidence" value="ECO:0007669"/>
    <property type="project" value="InterPro"/>
</dbReference>
<dbReference type="GO" id="GO:0006432">
    <property type="term" value="P:phenylalanyl-tRNA aminoacylation"/>
    <property type="evidence" value="ECO:0007669"/>
    <property type="project" value="UniProtKB-UniRule"/>
</dbReference>
<dbReference type="CDD" id="cd00496">
    <property type="entry name" value="PheRS_alpha_core"/>
    <property type="match status" value="1"/>
</dbReference>
<dbReference type="FunFam" id="3.30.930.10:FF:000003">
    <property type="entry name" value="Phenylalanine--tRNA ligase alpha subunit"/>
    <property type="match status" value="1"/>
</dbReference>
<dbReference type="Gene3D" id="3.30.930.10">
    <property type="entry name" value="Bira Bifunctional Protein, Domain 2"/>
    <property type="match status" value="1"/>
</dbReference>
<dbReference type="HAMAP" id="MF_00281">
    <property type="entry name" value="Phe_tRNA_synth_alpha1"/>
    <property type="match status" value="1"/>
</dbReference>
<dbReference type="InterPro" id="IPR006195">
    <property type="entry name" value="aa-tRNA-synth_II"/>
</dbReference>
<dbReference type="InterPro" id="IPR045864">
    <property type="entry name" value="aa-tRNA-synth_II/BPL/LPL"/>
</dbReference>
<dbReference type="InterPro" id="IPR004529">
    <property type="entry name" value="Phe-tRNA-synth_IIc_asu"/>
</dbReference>
<dbReference type="InterPro" id="IPR004188">
    <property type="entry name" value="Phe-tRNA_ligase_II_N"/>
</dbReference>
<dbReference type="InterPro" id="IPR022911">
    <property type="entry name" value="Phe_tRNA_ligase_alpha1_bac"/>
</dbReference>
<dbReference type="InterPro" id="IPR002319">
    <property type="entry name" value="Phenylalanyl-tRNA_Synthase"/>
</dbReference>
<dbReference type="InterPro" id="IPR010978">
    <property type="entry name" value="tRNA-bd_arm"/>
</dbReference>
<dbReference type="NCBIfam" id="TIGR00468">
    <property type="entry name" value="pheS"/>
    <property type="match status" value="1"/>
</dbReference>
<dbReference type="PANTHER" id="PTHR11538:SF41">
    <property type="entry name" value="PHENYLALANINE--TRNA LIGASE, MITOCHONDRIAL"/>
    <property type="match status" value="1"/>
</dbReference>
<dbReference type="PANTHER" id="PTHR11538">
    <property type="entry name" value="PHENYLALANYL-TRNA SYNTHETASE"/>
    <property type="match status" value="1"/>
</dbReference>
<dbReference type="Pfam" id="PF02912">
    <property type="entry name" value="Phe_tRNA-synt_N"/>
    <property type="match status" value="1"/>
</dbReference>
<dbReference type="Pfam" id="PF01409">
    <property type="entry name" value="tRNA-synt_2d"/>
    <property type="match status" value="1"/>
</dbReference>
<dbReference type="SUPFAM" id="SSF55681">
    <property type="entry name" value="Class II aaRS and biotin synthetases"/>
    <property type="match status" value="1"/>
</dbReference>
<dbReference type="SUPFAM" id="SSF46589">
    <property type="entry name" value="tRNA-binding arm"/>
    <property type="match status" value="1"/>
</dbReference>
<dbReference type="PROSITE" id="PS50862">
    <property type="entry name" value="AA_TRNA_LIGASE_II"/>
    <property type="match status" value="1"/>
</dbReference>
<organism>
    <name type="scientific">Actinobacillus succinogenes (strain ATCC 55618 / DSM 22257 / CCUG 43843 / 130Z)</name>
    <dbReference type="NCBI Taxonomy" id="339671"/>
    <lineage>
        <taxon>Bacteria</taxon>
        <taxon>Pseudomonadati</taxon>
        <taxon>Pseudomonadota</taxon>
        <taxon>Gammaproteobacteria</taxon>
        <taxon>Pasteurellales</taxon>
        <taxon>Pasteurellaceae</taxon>
        <taxon>Actinobacillus</taxon>
    </lineage>
</organism>
<feature type="chain" id="PRO_1000071932" description="Phenylalanine--tRNA ligase alpha subunit">
    <location>
        <begin position="1"/>
        <end position="329"/>
    </location>
</feature>
<feature type="binding site" evidence="1">
    <location>
        <position position="254"/>
    </location>
    <ligand>
        <name>Mg(2+)</name>
        <dbReference type="ChEBI" id="CHEBI:18420"/>
        <note>shared with beta subunit</note>
    </ligand>
</feature>
<sequence>MQNLKQITEQARAALDELHDKGIEALENFRVEYFGKKGHFTQLMQGLRDVLPEERPAMGAKINEAKQTVLEILNAKKEQIEQAALNVKLEQERIDVSLPGRKVEAGGLHPVSITIGRVTKFFSELGFSVESGPEIESDYYNFDALNIPKHHPARADHDTFWFNPELLLRTQTSGVQIRTMEKKQPPIRIMAPGRVYRNDYDQTHTPMFHQIELLYVDKNANFTELKGLLHDFLRAFFEEDLQVRFRPSYFPFTEPSAEVDVMGKNGKWLEVLGCGMVHPNVLRNVGIDPNEYSGFAVGMGVERLTMLRYNVTDLRSFFENDLRFLKQFK</sequence>
<evidence type="ECO:0000255" key="1">
    <source>
        <dbReference type="HAMAP-Rule" id="MF_00281"/>
    </source>
</evidence>
<comment type="catalytic activity">
    <reaction evidence="1">
        <text>tRNA(Phe) + L-phenylalanine + ATP = L-phenylalanyl-tRNA(Phe) + AMP + diphosphate + H(+)</text>
        <dbReference type="Rhea" id="RHEA:19413"/>
        <dbReference type="Rhea" id="RHEA-COMP:9668"/>
        <dbReference type="Rhea" id="RHEA-COMP:9699"/>
        <dbReference type="ChEBI" id="CHEBI:15378"/>
        <dbReference type="ChEBI" id="CHEBI:30616"/>
        <dbReference type="ChEBI" id="CHEBI:33019"/>
        <dbReference type="ChEBI" id="CHEBI:58095"/>
        <dbReference type="ChEBI" id="CHEBI:78442"/>
        <dbReference type="ChEBI" id="CHEBI:78531"/>
        <dbReference type="ChEBI" id="CHEBI:456215"/>
        <dbReference type="EC" id="6.1.1.20"/>
    </reaction>
</comment>
<comment type="cofactor">
    <cofactor evidence="1">
        <name>Mg(2+)</name>
        <dbReference type="ChEBI" id="CHEBI:18420"/>
    </cofactor>
    <text evidence="1">Binds 2 magnesium ions per tetramer.</text>
</comment>
<comment type="subunit">
    <text evidence="1">Tetramer of two alpha and two beta subunits.</text>
</comment>
<comment type="subcellular location">
    <subcellularLocation>
        <location evidence="1">Cytoplasm</location>
    </subcellularLocation>
</comment>
<comment type="similarity">
    <text evidence="1">Belongs to the class-II aminoacyl-tRNA synthetase family. Phe-tRNA synthetase alpha subunit type 1 subfamily.</text>
</comment>
<reference key="1">
    <citation type="journal article" date="2010" name="BMC Genomics">
        <title>A genomic perspective on the potential of Actinobacillus succinogenes for industrial succinate production.</title>
        <authorList>
            <person name="McKinlay J.B."/>
            <person name="Laivenieks M."/>
            <person name="Schindler B.D."/>
            <person name="McKinlay A.A."/>
            <person name="Siddaramappa S."/>
            <person name="Challacombe J.F."/>
            <person name="Lowry S.R."/>
            <person name="Clum A."/>
            <person name="Lapidus A.L."/>
            <person name="Burkhart K.B."/>
            <person name="Harkins V."/>
            <person name="Vieille C."/>
        </authorList>
    </citation>
    <scope>NUCLEOTIDE SEQUENCE [LARGE SCALE GENOMIC DNA]</scope>
    <source>
        <strain>ATCC 55618 / DSM 22257 / CCUG 43843 / 130Z</strain>
    </source>
</reference>
<keyword id="KW-0030">Aminoacyl-tRNA synthetase</keyword>
<keyword id="KW-0067">ATP-binding</keyword>
<keyword id="KW-0963">Cytoplasm</keyword>
<keyword id="KW-0436">Ligase</keyword>
<keyword id="KW-0460">Magnesium</keyword>
<keyword id="KW-0479">Metal-binding</keyword>
<keyword id="KW-0547">Nucleotide-binding</keyword>
<keyword id="KW-0648">Protein biosynthesis</keyword>
<keyword id="KW-1185">Reference proteome</keyword>